<accession>Q5GXY4</accession>
<proteinExistence type="inferred from homology"/>
<dbReference type="EC" id="6.1.1.20" evidence="1"/>
<dbReference type="EMBL" id="AE013598">
    <property type="protein sequence ID" value="AAW76437.1"/>
    <property type="molecule type" value="Genomic_DNA"/>
</dbReference>
<dbReference type="SMR" id="Q5GXY4"/>
<dbReference type="STRING" id="291331.XOO3183"/>
<dbReference type="KEGG" id="xoo:XOO3183"/>
<dbReference type="PATRIC" id="fig|291331.8.peg.3529"/>
<dbReference type="HOGENOM" id="CLU_025086_0_1_6"/>
<dbReference type="Proteomes" id="UP000006735">
    <property type="component" value="Chromosome"/>
</dbReference>
<dbReference type="GO" id="GO:0005737">
    <property type="term" value="C:cytoplasm"/>
    <property type="evidence" value="ECO:0007669"/>
    <property type="project" value="UniProtKB-SubCell"/>
</dbReference>
<dbReference type="GO" id="GO:0005524">
    <property type="term" value="F:ATP binding"/>
    <property type="evidence" value="ECO:0007669"/>
    <property type="project" value="UniProtKB-UniRule"/>
</dbReference>
<dbReference type="GO" id="GO:0000287">
    <property type="term" value="F:magnesium ion binding"/>
    <property type="evidence" value="ECO:0007669"/>
    <property type="project" value="UniProtKB-UniRule"/>
</dbReference>
<dbReference type="GO" id="GO:0004826">
    <property type="term" value="F:phenylalanine-tRNA ligase activity"/>
    <property type="evidence" value="ECO:0007669"/>
    <property type="project" value="UniProtKB-UniRule"/>
</dbReference>
<dbReference type="GO" id="GO:0000049">
    <property type="term" value="F:tRNA binding"/>
    <property type="evidence" value="ECO:0007669"/>
    <property type="project" value="InterPro"/>
</dbReference>
<dbReference type="GO" id="GO:0006432">
    <property type="term" value="P:phenylalanyl-tRNA aminoacylation"/>
    <property type="evidence" value="ECO:0007669"/>
    <property type="project" value="UniProtKB-UniRule"/>
</dbReference>
<dbReference type="CDD" id="cd00496">
    <property type="entry name" value="PheRS_alpha_core"/>
    <property type="match status" value="1"/>
</dbReference>
<dbReference type="FunFam" id="3.30.930.10:FF:000003">
    <property type="entry name" value="Phenylalanine--tRNA ligase alpha subunit"/>
    <property type="match status" value="1"/>
</dbReference>
<dbReference type="Gene3D" id="3.30.930.10">
    <property type="entry name" value="Bira Bifunctional Protein, Domain 2"/>
    <property type="match status" value="1"/>
</dbReference>
<dbReference type="HAMAP" id="MF_00281">
    <property type="entry name" value="Phe_tRNA_synth_alpha1"/>
    <property type="match status" value="1"/>
</dbReference>
<dbReference type="InterPro" id="IPR006195">
    <property type="entry name" value="aa-tRNA-synth_II"/>
</dbReference>
<dbReference type="InterPro" id="IPR045864">
    <property type="entry name" value="aa-tRNA-synth_II/BPL/LPL"/>
</dbReference>
<dbReference type="InterPro" id="IPR004188">
    <property type="entry name" value="Phe-tRNA_ligase_II_N"/>
</dbReference>
<dbReference type="InterPro" id="IPR022911">
    <property type="entry name" value="Phe_tRNA_ligase_alpha1_bac"/>
</dbReference>
<dbReference type="InterPro" id="IPR002319">
    <property type="entry name" value="Phenylalanyl-tRNA_Synthase"/>
</dbReference>
<dbReference type="InterPro" id="IPR010978">
    <property type="entry name" value="tRNA-bd_arm"/>
</dbReference>
<dbReference type="PANTHER" id="PTHR11538:SF41">
    <property type="entry name" value="PHENYLALANINE--TRNA LIGASE, MITOCHONDRIAL"/>
    <property type="match status" value="1"/>
</dbReference>
<dbReference type="PANTHER" id="PTHR11538">
    <property type="entry name" value="PHENYLALANYL-TRNA SYNTHETASE"/>
    <property type="match status" value="1"/>
</dbReference>
<dbReference type="Pfam" id="PF02912">
    <property type="entry name" value="Phe_tRNA-synt_N"/>
    <property type="match status" value="1"/>
</dbReference>
<dbReference type="Pfam" id="PF01409">
    <property type="entry name" value="tRNA-synt_2d"/>
    <property type="match status" value="1"/>
</dbReference>
<dbReference type="SUPFAM" id="SSF55681">
    <property type="entry name" value="Class II aaRS and biotin synthetases"/>
    <property type="match status" value="1"/>
</dbReference>
<dbReference type="SUPFAM" id="SSF46589">
    <property type="entry name" value="tRNA-binding arm"/>
    <property type="match status" value="1"/>
</dbReference>
<dbReference type="PROSITE" id="PS50862">
    <property type="entry name" value="AA_TRNA_LIGASE_II"/>
    <property type="match status" value="1"/>
</dbReference>
<evidence type="ECO:0000255" key="1">
    <source>
        <dbReference type="HAMAP-Rule" id="MF_00281"/>
    </source>
</evidence>
<reference key="1">
    <citation type="journal article" date="2005" name="Nucleic Acids Res.">
        <title>The genome sequence of Xanthomonas oryzae pathovar oryzae KACC10331, the bacterial blight pathogen of rice.</title>
        <authorList>
            <person name="Lee B.-M."/>
            <person name="Park Y.-J."/>
            <person name="Park D.-S."/>
            <person name="Kang H.-W."/>
            <person name="Kim J.-G."/>
            <person name="Song E.-S."/>
            <person name="Park I.-C."/>
            <person name="Yoon U.-H."/>
            <person name="Hahn J.-H."/>
            <person name="Koo B.-S."/>
            <person name="Lee G.-B."/>
            <person name="Kim H."/>
            <person name="Park H.-S."/>
            <person name="Yoon K.-O."/>
            <person name="Kim J.-H."/>
            <person name="Jung C.-H."/>
            <person name="Koh N.-H."/>
            <person name="Seo J.-S."/>
            <person name="Go S.-J."/>
        </authorList>
    </citation>
    <scope>NUCLEOTIDE SEQUENCE [LARGE SCALE GENOMIC DNA]</scope>
    <source>
        <strain>KACC10331 / KXO85</strain>
    </source>
</reference>
<comment type="catalytic activity">
    <reaction evidence="1">
        <text>tRNA(Phe) + L-phenylalanine + ATP = L-phenylalanyl-tRNA(Phe) + AMP + diphosphate + H(+)</text>
        <dbReference type="Rhea" id="RHEA:19413"/>
        <dbReference type="Rhea" id="RHEA-COMP:9668"/>
        <dbReference type="Rhea" id="RHEA-COMP:9699"/>
        <dbReference type="ChEBI" id="CHEBI:15378"/>
        <dbReference type="ChEBI" id="CHEBI:30616"/>
        <dbReference type="ChEBI" id="CHEBI:33019"/>
        <dbReference type="ChEBI" id="CHEBI:58095"/>
        <dbReference type="ChEBI" id="CHEBI:78442"/>
        <dbReference type="ChEBI" id="CHEBI:78531"/>
        <dbReference type="ChEBI" id="CHEBI:456215"/>
        <dbReference type="EC" id="6.1.1.20"/>
    </reaction>
</comment>
<comment type="cofactor">
    <cofactor evidence="1">
        <name>Mg(2+)</name>
        <dbReference type="ChEBI" id="CHEBI:18420"/>
    </cofactor>
    <text evidence="1">Binds 2 magnesium ions per tetramer.</text>
</comment>
<comment type="subunit">
    <text evidence="1">Tetramer of two alpha and two beta subunits.</text>
</comment>
<comment type="subcellular location">
    <subcellularLocation>
        <location evidence="1">Cytoplasm</location>
    </subcellularLocation>
</comment>
<comment type="similarity">
    <text evidence="1">Belongs to the class-II aminoacyl-tRNA synthetase family. Phe-tRNA synthetase alpha subunit type 1 subfamily.</text>
</comment>
<sequence length="331" mass="37207">MSEIQSLTERALADVAAAQTPDQLEALRVALLGKSGSITAQLKQLGTLPADQRKAAGEAINLLRDALTAALAERKNTLETAALDARLAGERIDVTLPGRRSERGGLHPVTRTLERIVEIFARLGYELSDGPEIEDDWHNFEALNFPPHHPARAMHDTFYFGDGRLLRTHTSGVQVRYMDAHKPPLHMIAAGKVYRSDSDQTHSPMFHQLEGLLVDEHSTFADLKGTLSEFVRAFFERDFEMRFRPSYFPFVEPGAEVDIAWQQPDGSTRWLEVLGCGMVHPNVLRNVGIDPERYTGFAFGLGVERFAMLRYGVNDLRAFFENDVRFLRQFA</sequence>
<keyword id="KW-0030">Aminoacyl-tRNA synthetase</keyword>
<keyword id="KW-0067">ATP-binding</keyword>
<keyword id="KW-0963">Cytoplasm</keyword>
<keyword id="KW-0436">Ligase</keyword>
<keyword id="KW-0460">Magnesium</keyword>
<keyword id="KW-0479">Metal-binding</keyword>
<keyword id="KW-0547">Nucleotide-binding</keyword>
<keyword id="KW-0648">Protein biosynthesis</keyword>
<keyword id="KW-1185">Reference proteome</keyword>
<feature type="chain" id="PRO_0000232041" description="Phenylalanine--tRNA ligase alpha subunit">
    <location>
        <begin position="1"/>
        <end position="331"/>
    </location>
</feature>
<feature type="binding site" evidence="1">
    <location>
        <position position="252"/>
    </location>
    <ligand>
        <name>Mg(2+)</name>
        <dbReference type="ChEBI" id="CHEBI:18420"/>
        <note>shared with beta subunit</note>
    </ligand>
</feature>
<protein>
    <recommendedName>
        <fullName evidence="1">Phenylalanine--tRNA ligase alpha subunit</fullName>
        <ecNumber evidence="1">6.1.1.20</ecNumber>
    </recommendedName>
    <alternativeName>
        <fullName evidence="1">Phenylalanyl-tRNA synthetase alpha subunit</fullName>
        <shortName evidence="1">PheRS</shortName>
    </alternativeName>
</protein>
<organism>
    <name type="scientific">Xanthomonas oryzae pv. oryzae (strain KACC10331 / KXO85)</name>
    <dbReference type="NCBI Taxonomy" id="291331"/>
    <lineage>
        <taxon>Bacteria</taxon>
        <taxon>Pseudomonadati</taxon>
        <taxon>Pseudomonadota</taxon>
        <taxon>Gammaproteobacteria</taxon>
        <taxon>Lysobacterales</taxon>
        <taxon>Lysobacteraceae</taxon>
        <taxon>Xanthomonas</taxon>
    </lineage>
</organism>
<name>SYFA_XANOR</name>
<gene>
    <name evidence="1" type="primary">pheS</name>
    <name type="ordered locus">XOO3183</name>
</gene>